<gene>
    <name type="primary">lsrD</name>
    <name type="ordered locus">YE0526</name>
</gene>
<name>LSRD_YERE8</name>
<organism>
    <name type="scientific">Yersinia enterocolitica serotype O:8 / biotype 1B (strain NCTC 13174 / 8081)</name>
    <dbReference type="NCBI Taxonomy" id="393305"/>
    <lineage>
        <taxon>Bacteria</taxon>
        <taxon>Pseudomonadati</taxon>
        <taxon>Pseudomonadota</taxon>
        <taxon>Gammaproteobacteria</taxon>
        <taxon>Enterobacterales</taxon>
        <taxon>Yersiniaceae</taxon>
        <taxon>Yersinia</taxon>
    </lineage>
</organism>
<comment type="function">
    <text evidence="1">Part of the ABC transporter complex LsrABCD involved in autoinducer 2 (AI-2) import. Probably responsible for the translocation of the substrate across the membrane (By similarity).</text>
</comment>
<comment type="subunit">
    <text evidence="1">The complex is composed of two ATP-binding proteins (LsrA), two transmembrane proteins (LsrC and LsrD) and a solute-binding protein (LsrB).</text>
</comment>
<comment type="subcellular location">
    <subcellularLocation>
        <location evidence="1">Cell inner membrane</location>
        <topology evidence="1">Multi-pass membrane protein</topology>
    </subcellularLocation>
</comment>
<comment type="similarity">
    <text evidence="3">Belongs to the binding-protein-dependent transport system permease family. AraH/RbsC subfamily.</text>
</comment>
<keyword id="KW-0997">Cell inner membrane</keyword>
<keyword id="KW-1003">Cell membrane</keyword>
<keyword id="KW-0472">Membrane</keyword>
<keyword id="KW-0812">Transmembrane</keyword>
<keyword id="KW-1133">Transmembrane helix</keyword>
<keyword id="KW-0813">Transport</keyword>
<reference key="1">
    <citation type="journal article" date="2006" name="PLoS Genet.">
        <title>The complete genome sequence and comparative genome analysis of the high pathogenicity Yersinia enterocolitica strain 8081.</title>
        <authorList>
            <person name="Thomson N.R."/>
            <person name="Howard S."/>
            <person name="Wren B.W."/>
            <person name="Holden M.T.G."/>
            <person name="Crossman L."/>
            <person name="Challis G.L."/>
            <person name="Churcher C."/>
            <person name="Mungall K."/>
            <person name="Brooks K."/>
            <person name="Chillingworth T."/>
            <person name="Feltwell T."/>
            <person name="Abdellah Z."/>
            <person name="Hauser H."/>
            <person name="Jagels K."/>
            <person name="Maddison M."/>
            <person name="Moule S."/>
            <person name="Sanders M."/>
            <person name="Whitehead S."/>
            <person name="Quail M.A."/>
            <person name="Dougan G."/>
            <person name="Parkhill J."/>
            <person name="Prentice M.B."/>
        </authorList>
    </citation>
    <scope>NUCLEOTIDE SEQUENCE [LARGE SCALE GENOMIC DNA]</scope>
    <source>
        <strain>NCTC 13174 / 8081</strain>
    </source>
</reference>
<protein>
    <recommendedName>
        <fullName>Autoinducer 2 import system permease protein LsrD</fullName>
        <shortName>AI-2 import system permease protein LsrD</shortName>
    </recommendedName>
</protein>
<proteinExistence type="inferred from homology"/>
<evidence type="ECO:0000250" key="1"/>
<evidence type="ECO:0000255" key="2"/>
<evidence type="ECO:0000305" key="3"/>
<feature type="chain" id="PRO_0000351379" description="Autoinducer 2 import system permease protein LsrD">
    <location>
        <begin position="1"/>
        <end position="331"/>
    </location>
</feature>
<feature type="transmembrane region" description="Helical" evidence="2">
    <location>
        <begin position="7"/>
        <end position="27"/>
    </location>
</feature>
<feature type="transmembrane region" description="Helical" evidence="2">
    <location>
        <begin position="45"/>
        <end position="65"/>
    </location>
</feature>
<feature type="transmembrane region" description="Helical" evidence="2">
    <location>
        <begin position="67"/>
        <end position="87"/>
    </location>
</feature>
<feature type="transmembrane region" description="Helical" evidence="2">
    <location>
        <begin position="90"/>
        <end position="110"/>
    </location>
</feature>
<feature type="transmembrane region" description="Helical" evidence="2">
    <location>
        <begin position="118"/>
        <end position="138"/>
    </location>
</feature>
<feature type="transmembrane region" description="Helical" evidence="2">
    <location>
        <begin position="162"/>
        <end position="182"/>
    </location>
</feature>
<feature type="transmembrane region" description="Helical" evidence="2">
    <location>
        <begin position="212"/>
        <end position="232"/>
    </location>
</feature>
<feature type="transmembrane region" description="Helical" evidence="2">
    <location>
        <begin position="240"/>
        <end position="260"/>
    </location>
</feature>
<feature type="transmembrane region" description="Helical" evidence="2">
    <location>
        <begin position="261"/>
        <end position="281"/>
    </location>
</feature>
<feature type="transmembrane region" description="Helical" evidence="2">
    <location>
        <begin position="288"/>
        <end position="308"/>
    </location>
</feature>
<sequence>MNIYRRYGWELALAALLVLEIGLFGLSNSRMLDINVLLFSTSDFICIGIVALPLTMVIVSGGIDISFGSTIGLCSIFLGVMFQAGVPMSIAIPLTLLVGALCGLINAGLILYTGVNPLVITLGTMYLFGGSALLLSGISGATGYEGIGGFPTAFTDFANQTLLGLPVPLVIFMVCVLLFWLLMHRTHSGRNVFLIGQNSRVARYSALPVARTLCLLYALTGMASAIAAVLLVSYFGSARSDLGASFLMPAITAVVLGGANIYGGSGSILGTALAVLLVGYLQQGLQMIGTPNQISSALSGALLILVVVGRSISLHRHLIYEWLQRRRNTVV</sequence>
<dbReference type="EMBL" id="AM286415">
    <property type="protein sequence ID" value="CAL10644.1"/>
    <property type="molecule type" value="Genomic_DNA"/>
</dbReference>
<dbReference type="RefSeq" id="WP_011815486.1">
    <property type="nucleotide sequence ID" value="NC_008800.1"/>
</dbReference>
<dbReference type="RefSeq" id="YP_001004886.1">
    <property type="nucleotide sequence ID" value="NC_008800.1"/>
</dbReference>
<dbReference type="KEGG" id="yen:YE0526"/>
<dbReference type="PATRIC" id="fig|393305.7.peg.616"/>
<dbReference type="eggNOG" id="COG1172">
    <property type="taxonomic scope" value="Bacteria"/>
</dbReference>
<dbReference type="HOGENOM" id="CLU_028880_0_0_6"/>
<dbReference type="OrthoDB" id="192433at2"/>
<dbReference type="Proteomes" id="UP000000642">
    <property type="component" value="Chromosome"/>
</dbReference>
<dbReference type="GO" id="GO:0005886">
    <property type="term" value="C:plasma membrane"/>
    <property type="evidence" value="ECO:0007669"/>
    <property type="project" value="UniProtKB-SubCell"/>
</dbReference>
<dbReference type="GO" id="GO:0022857">
    <property type="term" value="F:transmembrane transporter activity"/>
    <property type="evidence" value="ECO:0007669"/>
    <property type="project" value="InterPro"/>
</dbReference>
<dbReference type="CDD" id="cd06579">
    <property type="entry name" value="TM_PBP1_transp_AraH_like"/>
    <property type="match status" value="1"/>
</dbReference>
<dbReference type="InterPro" id="IPR001851">
    <property type="entry name" value="ABC_transp_permease"/>
</dbReference>
<dbReference type="NCBIfam" id="NF011612">
    <property type="entry name" value="PRK15038.1"/>
    <property type="match status" value="1"/>
</dbReference>
<dbReference type="PANTHER" id="PTHR32196">
    <property type="entry name" value="ABC TRANSPORTER PERMEASE PROTEIN YPHD-RELATED-RELATED"/>
    <property type="match status" value="1"/>
</dbReference>
<dbReference type="PANTHER" id="PTHR32196:SF71">
    <property type="entry name" value="AUTOINDUCER 2 IMPORT SYSTEM PERMEASE PROTEIN LSRD"/>
    <property type="match status" value="1"/>
</dbReference>
<dbReference type="Pfam" id="PF02653">
    <property type="entry name" value="BPD_transp_2"/>
    <property type="match status" value="1"/>
</dbReference>
<accession>A1JJ53</accession>